<name>VE4_HPV6C</name>
<comment type="similarity">
    <text evidence="1">Belongs to the papillomaviridae E4 protein family.</text>
</comment>
<dbReference type="EMBL" id="M26656">
    <property type="protein sequence ID" value="AAA47011.1"/>
    <property type="molecule type" value="Genomic_DNA"/>
</dbReference>
<dbReference type="InterPro" id="IPR003861">
    <property type="entry name" value="Papilloma_E4"/>
</dbReference>
<dbReference type="Pfam" id="PF02711">
    <property type="entry name" value="Pap_E4"/>
    <property type="match status" value="1"/>
</dbReference>
<organismHost>
    <name type="scientific">Homo sapiens</name>
    <name type="common">Human</name>
    <dbReference type="NCBI Taxonomy" id="9606"/>
</organismHost>
<sequence>MVVPIIGKYVMAAQLYVLLHLYLALYEKYPLLNLLHTPPHRPPPLQCPPAPRKTACRRRLESEHVDRPLTTPCVWPTLDPWTVQSTTSSLTITTSTKEGTTVTVQLRL</sequence>
<accession>P20969</accession>
<evidence type="ECO:0000305" key="1"/>
<feature type="chain" id="PRO_0000133261" description="Probable protein E4">
    <location>
        <begin position="1"/>
        <end position="108"/>
    </location>
</feature>
<reference key="1">
    <citation type="journal article" date="1989" name="Virus Genes">
        <title>Structural analysis of human papillomavirus type 6c isolates from condyloma acuminatum and juvenile-onset and adult-onset laryngeal papillomata.</title>
        <authorList>
            <person name="Metcalfe L."/>
            <person name="Chen S.-L."/>
            <person name="Mounts P."/>
        </authorList>
    </citation>
    <scope>NUCLEOTIDE SEQUENCE [GENOMIC DNA]</scope>
    <source>
        <strain>Isolates HPV-6C/[GT,ART]</strain>
    </source>
</reference>
<gene>
    <name type="primary">E4</name>
</gene>
<protein>
    <recommendedName>
        <fullName>Probable protein E4</fullName>
    </recommendedName>
</protein>
<proteinExistence type="inferred from homology"/>
<organism>
    <name type="scientific">Human papillomavirus type 6c</name>
    <dbReference type="NCBI Taxonomy" id="10601"/>
    <lineage>
        <taxon>Viruses</taxon>
        <taxon>Monodnaviria</taxon>
        <taxon>Shotokuvirae</taxon>
        <taxon>Cossaviricota</taxon>
        <taxon>Papovaviricetes</taxon>
        <taxon>Zurhausenvirales</taxon>
        <taxon>Papillomaviridae</taxon>
        <taxon>Firstpapillomavirinae</taxon>
        <taxon>Alphapapillomavirus</taxon>
        <taxon>Alphapapillomavirus 10</taxon>
    </lineage>
</organism>
<keyword id="KW-0244">Early protein</keyword>